<feature type="signal peptide" evidence="5">
    <location>
        <begin position="1"/>
        <end position="26"/>
    </location>
</feature>
<feature type="chain" id="PRO_0000389460" description="Leucine-rich repeat receptor-like protein kinase PEPR2">
    <location>
        <begin position="27"/>
        <end position="1088"/>
    </location>
</feature>
<feature type="topological domain" description="Extracellular" evidence="5">
    <location>
        <begin position="27"/>
        <end position="739"/>
    </location>
</feature>
<feature type="transmembrane region" description="Helical" evidence="5">
    <location>
        <begin position="740"/>
        <end position="760"/>
    </location>
</feature>
<feature type="topological domain" description="Cytoplasmic" evidence="5">
    <location>
        <begin position="761"/>
        <end position="1088"/>
    </location>
</feature>
<feature type="repeat" description="LRR 1">
    <location>
        <begin position="75"/>
        <end position="99"/>
    </location>
</feature>
<feature type="repeat" description="LRR 2">
    <location>
        <begin position="100"/>
        <end position="122"/>
    </location>
</feature>
<feature type="repeat" description="LRR 3">
    <location>
        <begin position="123"/>
        <end position="146"/>
    </location>
</feature>
<feature type="repeat" description="LRR 4">
    <location>
        <begin position="147"/>
        <end position="170"/>
    </location>
</feature>
<feature type="repeat" description="LRR 5">
    <location>
        <begin position="172"/>
        <end position="194"/>
    </location>
</feature>
<feature type="repeat" description="LRR 6">
    <location>
        <begin position="195"/>
        <end position="219"/>
    </location>
</feature>
<feature type="repeat" description="LRR 7">
    <location>
        <begin position="221"/>
        <end position="243"/>
    </location>
</feature>
<feature type="repeat" description="LRR 8">
    <location>
        <begin position="244"/>
        <end position="267"/>
    </location>
</feature>
<feature type="repeat" description="LRR 9">
    <location>
        <begin position="269"/>
        <end position="291"/>
    </location>
</feature>
<feature type="repeat" description="LRR 10">
    <location>
        <begin position="292"/>
        <end position="315"/>
    </location>
</feature>
<feature type="repeat" description="LRR 11">
    <location>
        <begin position="316"/>
        <end position="339"/>
    </location>
</feature>
<feature type="repeat" description="LRR 12">
    <location>
        <begin position="341"/>
        <end position="363"/>
    </location>
</feature>
<feature type="repeat" description="LRR 13">
    <location>
        <begin position="365"/>
        <end position="387"/>
    </location>
</feature>
<feature type="repeat" description="LRR 14">
    <location>
        <begin position="388"/>
        <end position="411"/>
    </location>
</feature>
<feature type="repeat" description="LRR 15">
    <location>
        <begin position="412"/>
        <end position="435"/>
    </location>
</feature>
<feature type="repeat" description="LRR 16">
    <location>
        <begin position="436"/>
        <end position="459"/>
    </location>
</feature>
<feature type="repeat" description="LRR 17">
    <location>
        <begin position="460"/>
        <end position="485"/>
    </location>
</feature>
<feature type="repeat" description="LRR 18">
    <location>
        <begin position="487"/>
        <end position="506"/>
    </location>
</feature>
<feature type="repeat" description="LRR 19">
    <location>
        <begin position="507"/>
        <end position="529"/>
    </location>
</feature>
<feature type="repeat" description="LRR 20">
    <location>
        <begin position="530"/>
        <end position="554"/>
    </location>
</feature>
<feature type="repeat" description="LRR 21">
    <location>
        <begin position="556"/>
        <end position="577"/>
    </location>
</feature>
<feature type="repeat" description="LRR 22">
    <location>
        <begin position="578"/>
        <end position="602"/>
    </location>
</feature>
<feature type="repeat" description="LRR 23">
    <location>
        <begin position="603"/>
        <end position="627"/>
    </location>
</feature>
<feature type="repeat" description="LRR 24">
    <location>
        <begin position="629"/>
        <end position="651"/>
    </location>
</feature>
<feature type="repeat" description="LRR 25">
    <location>
        <begin position="652"/>
        <end position="676"/>
    </location>
</feature>
<feature type="repeat" description="LRR 26">
    <location>
        <begin position="678"/>
        <end position="698"/>
    </location>
</feature>
<feature type="domain" description="Protein kinase" evidence="6">
    <location>
        <begin position="794"/>
        <end position="1080"/>
    </location>
</feature>
<feature type="active site" description="Proton acceptor" evidence="6 7">
    <location>
        <position position="921"/>
    </location>
</feature>
<feature type="binding site" evidence="6">
    <location>
        <begin position="800"/>
        <end position="808"/>
    </location>
    <ligand>
        <name>ATP</name>
        <dbReference type="ChEBI" id="CHEBI:30616"/>
    </ligand>
</feature>
<feature type="binding site" evidence="6">
    <location>
        <position position="822"/>
    </location>
    <ligand>
        <name>ATP</name>
        <dbReference type="ChEBI" id="CHEBI:30616"/>
    </ligand>
</feature>
<feature type="modified residue" description="Phosphothreonine" evidence="3">
    <location>
        <position position="791"/>
    </location>
</feature>
<feature type="modified residue" description="Phosphotyrosine" evidence="3">
    <location>
        <position position="868"/>
    </location>
</feature>
<feature type="modified residue" description="Phosphotyrosine" evidence="2">
    <location>
        <position position="908"/>
    </location>
</feature>
<feature type="modified residue" description="Phosphotyrosine" evidence="2">
    <location>
        <position position="962"/>
    </location>
</feature>
<feature type="modified residue" description="Phosphotyrosine" evidence="4">
    <location>
        <position position="969"/>
    </location>
</feature>
<feature type="glycosylation site" description="N-linked (GlcNAc...) asparagine" evidence="5">
    <location>
        <position position="55"/>
    </location>
</feature>
<feature type="glycosylation site" description="N-linked (GlcNAc...) asparagine" evidence="5">
    <location>
        <position position="82"/>
    </location>
</feature>
<feature type="glycosylation site" description="N-linked (GlcNAc...) asparagine" evidence="5">
    <location>
        <position position="122"/>
    </location>
</feature>
<feature type="glycosylation site" description="N-linked (GlcNAc...) asparagine" evidence="5">
    <location>
        <position position="149"/>
    </location>
</feature>
<feature type="glycosylation site" description="N-linked (GlcNAc...) asparagine" evidence="5">
    <location>
        <position position="159"/>
    </location>
</feature>
<feature type="glycosylation site" description="N-linked (GlcNAc...) asparagine" evidence="5">
    <location>
        <position position="183"/>
    </location>
</feature>
<feature type="glycosylation site" description="N-linked (GlcNAc...) asparagine" evidence="5">
    <location>
        <position position="194"/>
    </location>
</feature>
<feature type="glycosylation site" description="N-linked (GlcNAc...) asparagine" evidence="5">
    <location>
        <position position="209"/>
    </location>
</feature>
<feature type="glycosylation site" description="N-linked (GlcNAc...) asparagine" evidence="5">
    <location>
        <position position="229"/>
    </location>
</feature>
<feature type="glycosylation site" description="N-linked (GlcNAc...) asparagine" evidence="5">
    <location>
        <position position="266"/>
    </location>
</feature>
<feature type="glycosylation site" description="N-linked (GlcNAc...) asparagine" evidence="5">
    <location>
        <position position="279"/>
    </location>
</feature>
<feature type="glycosylation site" description="N-linked (GlcNAc...) asparagine" evidence="5">
    <location>
        <position position="314"/>
    </location>
</feature>
<feature type="glycosylation site" description="N-linked (GlcNAc...) asparagine" evidence="5">
    <location>
        <position position="373"/>
    </location>
</feature>
<feature type="glycosylation site" description="N-linked (GlcNAc...) asparagine" evidence="5">
    <location>
        <position position="411"/>
    </location>
</feature>
<feature type="glycosylation site" description="N-linked (GlcNAc...) asparagine" evidence="5">
    <location>
        <position position="537"/>
    </location>
</feature>
<feature type="glycosylation site" description="N-linked (GlcNAc...) asparagine" evidence="5">
    <location>
        <position position="568"/>
    </location>
</feature>
<feature type="glycosylation site" description="N-linked (GlcNAc...) asparagine" evidence="5">
    <location>
        <position position="658"/>
    </location>
</feature>
<feature type="glycosylation site" description="N-linked (GlcNAc...) asparagine" evidence="5">
    <location>
        <position position="698"/>
    </location>
</feature>
<organism>
    <name type="scientific">Arabidopsis thaliana</name>
    <name type="common">Mouse-ear cress</name>
    <dbReference type="NCBI Taxonomy" id="3702"/>
    <lineage>
        <taxon>Eukaryota</taxon>
        <taxon>Viridiplantae</taxon>
        <taxon>Streptophyta</taxon>
        <taxon>Embryophyta</taxon>
        <taxon>Tracheophyta</taxon>
        <taxon>Spermatophyta</taxon>
        <taxon>Magnoliopsida</taxon>
        <taxon>eudicotyledons</taxon>
        <taxon>Gunneridae</taxon>
        <taxon>Pentapetalae</taxon>
        <taxon>rosids</taxon>
        <taxon>malvids</taxon>
        <taxon>Brassicales</taxon>
        <taxon>Brassicaceae</taxon>
        <taxon>Camelineae</taxon>
        <taxon>Arabidopsis</taxon>
    </lineage>
</organism>
<name>PEPR2_ARATH</name>
<proteinExistence type="evidence at protein level"/>
<protein>
    <recommendedName>
        <fullName>Leucine-rich repeat receptor-like protein kinase PEPR2</fullName>
        <ecNumber>2.7.11.1</ecNumber>
    </recommendedName>
    <alternativeName>
        <fullName>Elicitor peptide 1 receptor 2</fullName>
        <shortName>PEP1 receptor 2</shortName>
    </alternativeName>
</protein>
<sequence>MRNLGLLEITLLCSLFVYFRIDSVSSLNSDGLALLSLLKHFDKVPLEVASTWKENTSETTPCNNNWFGVICDLSGNVVETLNLSASGLSGQLGSEIGELKSLVTLDLSLNSFSGLLPSTLGNCTSLEYLDLSNNDFSGEVPDIFGSLQNLTFLYLDRNNLSGLIPASVGGLIELVDLRMSYNNLSGTIPELLGNCSKLEYLALNNNKLNGSLPASLYLLENLGELFVSNNSLGGRLHFGSSNCKKLVSLDLSFNDFQGGVPPEIGNCSSLHSLVMVKCNLTGTIPSSMGMLRKVSVIDLSDNRLSGNIPQELGNCSSLETLKLNDNQLQGEIPPALSKLKKLQSLELFFNKLSGEIPIGIWKIQSLTQMLVYNNTLTGELPVEVTQLKHLKKLTLFNNGFYGDIPMSLGLNRSLEEVDLLGNRFTGEIPPHLCHGQKLRLFILGSNQLHGKIPASIRQCKTLERVRLEDNKLSGVLPEFPESLSLSYVNLGSNSFEGSIPRSLGSCKNLLTIDLSQNKLTGLIPPELGNLQSLGLLNLSHNYLEGPLPSQLSGCARLLYFDVGSNSLNGSIPSSFRSWKSLSTLVLSDNNFLGAIPQFLAELDRLSDLRIARNAFGGKIPSSVGLLKSLRYGLDLSANVFTGEIPTTLGALINLERLNISNNKLTGPLSVLQSLKSLNQVDVSYNQFTGPIPVNLLSNSSKFSGNPDLCIQASYSVSAIIRKEFKSCKGQVKLSTWKIALIAAGSSLSVLALLFALFLVLCRCKRGTKTEDANILAEEGLSLLLNKVLAATDNLDDKYIIGRGAHGVVYRASLGSGEEYAVKKLIFAEHIRANQNMKREIETIGLVRHRNLIRLERFWMRKEDGLMLYQYMPNGSLHDVLHRGNQGEAVLDWSARFNIALGISHGLAYLHHDCHPPIIHRDIKPENILMDSDMEPHIGDFGLARILDDSTVSTATVTGTTGYIAPENAYKTVRSKESDVYSYGVVLLELVTGKRALDRSFPEDINIVSWVRSVLSSYEDEDDTAGPIVDPKLVDELLDTKLREQAIQVTDLALRCTDKRPENRPSMRDVVKDLTDLESFVRSTSGSVH</sequence>
<evidence type="ECO:0000250" key="1"/>
<evidence type="ECO:0000250" key="2">
    <source>
        <dbReference type="UniProtKB" id="C0LGT6"/>
    </source>
</evidence>
<evidence type="ECO:0000250" key="3">
    <source>
        <dbReference type="UniProtKB" id="O22476"/>
    </source>
</evidence>
<evidence type="ECO:0000250" key="4">
    <source>
        <dbReference type="UniProtKB" id="Q9M0G7"/>
    </source>
</evidence>
<evidence type="ECO:0000255" key="5"/>
<evidence type="ECO:0000255" key="6">
    <source>
        <dbReference type="PROSITE-ProRule" id="PRU00159"/>
    </source>
</evidence>
<evidence type="ECO:0000255" key="7">
    <source>
        <dbReference type="PROSITE-ProRule" id="PRU10027"/>
    </source>
</evidence>
<evidence type="ECO:0000269" key="8">
    <source>
    </source>
</evidence>
<evidence type="ECO:0000269" key="9">
    <source>
    </source>
</evidence>
<gene>
    <name type="primary">PEPR2</name>
    <name type="ordered locus">At1g17750</name>
    <name type="ORF">F11A6.9</name>
</gene>
<comment type="function">
    <text evidence="1">Acts as a receptor for PEP defense peptides. Unlike typical immune receptors, senses an endogenous elicitor that potentiates PAMP-inducible plant responses (By similarity).</text>
</comment>
<comment type="catalytic activity">
    <reaction>
        <text>L-seryl-[protein] + ATP = O-phospho-L-seryl-[protein] + ADP + H(+)</text>
        <dbReference type="Rhea" id="RHEA:17989"/>
        <dbReference type="Rhea" id="RHEA-COMP:9863"/>
        <dbReference type="Rhea" id="RHEA-COMP:11604"/>
        <dbReference type="ChEBI" id="CHEBI:15378"/>
        <dbReference type="ChEBI" id="CHEBI:29999"/>
        <dbReference type="ChEBI" id="CHEBI:30616"/>
        <dbReference type="ChEBI" id="CHEBI:83421"/>
        <dbReference type="ChEBI" id="CHEBI:456216"/>
        <dbReference type="EC" id="2.7.11.1"/>
    </reaction>
</comment>
<comment type="catalytic activity">
    <reaction>
        <text>L-threonyl-[protein] + ATP = O-phospho-L-threonyl-[protein] + ADP + H(+)</text>
        <dbReference type="Rhea" id="RHEA:46608"/>
        <dbReference type="Rhea" id="RHEA-COMP:11060"/>
        <dbReference type="Rhea" id="RHEA-COMP:11605"/>
        <dbReference type="ChEBI" id="CHEBI:15378"/>
        <dbReference type="ChEBI" id="CHEBI:30013"/>
        <dbReference type="ChEBI" id="CHEBI:30616"/>
        <dbReference type="ChEBI" id="CHEBI:61977"/>
        <dbReference type="ChEBI" id="CHEBI:456216"/>
        <dbReference type="EC" id="2.7.11.1"/>
    </reaction>
</comment>
<comment type="subunit">
    <text evidence="8 9">Interacts with BAK1 (PubMed:20018402). Interacts with CLE14 (PubMed:28586647).</text>
</comment>
<comment type="interaction">
    <interactant intactId="EBI-20652612">
        <id>Q9FZ59</id>
    </interactant>
    <interactant intactId="EBI-16954682">
        <id>Q9M9S4</id>
        <label>At1g14390</label>
    </interactant>
    <organismsDiffer>false</organismsDiffer>
    <experiments>2</experiments>
</comment>
<comment type="interaction">
    <interactant intactId="EBI-20652612">
        <id>Q9FZ59</id>
    </interactant>
    <interactant intactId="EBI-1238661">
        <id>Q9M9C5</id>
        <label>At1g68400</label>
    </interactant>
    <organismsDiffer>false</organismsDiffer>
    <experiments>3</experiments>
</comment>
<comment type="interaction">
    <interactant intactId="EBI-20652612">
        <id>Q9FZ59</id>
    </interactant>
    <interactant intactId="EBI-20651541">
        <id>C0LGJ9</id>
        <label>At2g02780</label>
    </interactant>
    <organismsDiffer>false</organismsDiffer>
    <experiments>2</experiments>
</comment>
<comment type="interaction">
    <interactant intactId="EBI-20652612">
        <id>Q9FZ59</id>
    </interactant>
    <interactant intactId="EBI-16912451">
        <id>Q9SUQ3</id>
        <label>At4g23740</label>
    </interactant>
    <organismsDiffer>false</organismsDiffer>
    <experiments>2</experiments>
</comment>
<comment type="interaction">
    <interactant intactId="EBI-20652612">
        <id>Q9FZ59</id>
    </interactant>
    <interactant intactId="EBI-16955262">
        <id>C0LGR9</id>
        <label>At4g31250</label>
    </interactant>
    <organismsDiffer>false</organismsDiffer>
    <experiments>2</experiments>
</comment>
<comment type="interaction">
    <interactant intactId="EBI-20652612">
        <id>Q9FZ59</id>
    </interactant>
    <interactant intactId="EBI-16964970">
        <id>C0LGU5</id>
        <label>At5g45780</label>
    </interactant>
    <organismsDiffer>false</organismsDiffer>
    <experiments>3</experiments>
</comment>
<comment type="interaction">
    <interactant intactId="EBI-20652612">
        <id>Q9FZ59</id>
    </interactant>
    <interactant intactId="EBI-16934827">
        <id>Q8W4S5</id>
        <label>At5g63710</label>
    </interactant>
    <organismsDiffer>false</organismsDiffer>
    <experiments>2</experiments>
</comment>
<comment type="interaction">
    <interactant intactId="EBI-20652612">
        <id>Q9FZ59</id>
    </interactant>
    <interactant intactId="EBI-16905069">
        <id>C0LGQ5</id>
        <label>GSO1</label>
    </interactant>
    <organismsDiffer>false</organismsDiffer>
    <experiments>2</experiments>
</comment>
<comment type="interaction">
    <interactant intactId="EBI-20652612">
        <id>Q9FZ59</id>
    </interactant>
    <interactant intactId="EBI-16196163">
        <id>C0LGU7</id>
        <label>MDIS1</label>
    </interactant>
    <organismsDiffer>false</organismsDiffer>
    <experiments>2</experiments>
</comment>
<comment type="subcellular location">
    <subcellularLocation>
        <location evidence="1">Cell membrane</location>
        <topology evidence="1">Single-pass type I membrane protein</topology>
    </subcellularLocation>
</comment>
<comment type="similarity">
    <text evidence="6">Belongs to the protein kinase superfamily. Ser/Thr protein kinase family.</text>
</comment>
<accession>Q9FZ59</accession>
<keyword id="KW-0067">ATP-binding</keyword>
<keyword id="KW-1003">Cell membrane</keyword>
<keyword id="KW-0325">Glycoprotein</keyword>
<keyword id="KW-0418">Kinase</keyword>
<keyword id="KW-0433">Leucine-rich repeat</keyword>
<keyword id="KW-0472">Membrane</keyword>
<keyword id="KW-0547">Nucleotide-binding</keyword>
<keyword id="KW-0597">Phosphoprotein</keyword>
<keyword id="KW-0611">Plant defense</keyword>
<keyword id="KW-0675">Receptor</keyword>
<keyword id="KW-1185">Reference proteome</keyword>
<keyword id="KW-0677">Repeat</keyword>
<keyword id="KW-0723">Serine/threonine-protein kinase</keyword>
<keyword id="KW-0732">Signal</keyword>
<keyword id="KW-0808">Transferase</keyword>
<keyword id="KW-0812">Transmembrane</keyword>
<keyword id="KW-1133">Transmembrane helix</keyword>
<dbReference type="EC" id="2.7.11.1"/>
<dbReference type="EMBL" id="AC034257">
    <property type="protein sequence ID" value="AAF99817.1"/>
    <property type="molecule type" value="Genomic_DNA"/>
</dbReference>
<dbReference type="EMBL" id="CP002684">
    <property type="protein sequence ID" value="AEE29632.1"/>
    <property type="molecule type" value="Genomic_DNA"/>
</dbReference>
<dbReference type="EMBL" id="FJ708635">
    <property type="protein sequence ID" value="ACN59231.1"/>
    <property type="molecule type" value="mRNA"/>
</dbReference>
<dbReference type="PIR" id="E86312">
    <property type="entry name" value="E86312"/>
</dbReference>
<dbReference type="RefSeq" id="NP_173217.1">
    <property type="nucleotide sequence ID" value="NM_101638.3"/>
</dbReference>
<dbReference type="SMR" id="Q9FZ59"/>
<dbReference type="BioGRID" id="23592">
    <property type="interactions" value="36"/>
</dbReference>
<dbReference type="FunCoup" id="Q9FZ59">
    <property type="interactions" value="329"/>
</dbReference>
<dbReference type="IntAct" id="Q9FZ59">
    <property type="interactions" value="42"/>
</dbReference>
<dbReference type="STRING" id="3702.Q9FZ59"/>
<dbReference type="GlyCosmos" id="Q9FZ59">
    <property type="glycosylation" value="18 sites, No reported glycans"/>
</dbReference>
<dbReference type="GlyGen" id="Q9FZ59">
    <property type="glycosylation" value="18 sites"/>
</dbReference>
<dbReference type="iPTMnet" id="Q9FZ59"/>
<dbReference type="PaxDb" id="3702-AT1G17750.1"/>
<dbReference type="ProteomicsDB" id="236810"/>
<dbReference type="EnsemblPlants" id="AT1G17750.1">
    <property type="protein sequence ID" value="AT1G17750.1"/>
    <property type="gene ID" value="AT1G17750"/>
</dbReference>
<dbReference type="GeneID" id="838353"/>
<dbReference type="Gramene" id="AT1G17750.1">
    <property type="protein sequence ID" value="AT1G17750.1"/>
    <property type="gene ID" value="AT1G17750"/>
</dbReference>
<dbReference type="KEGG" id="ath:AT1G17750"/>
<dbReference type="Araport" id="AT1G17750"/>
<dbReference type="TAIR" id="AT1G17750">
    <property type="gene designation" value="PEPR2"/>
</dbReference>
<dbReference type="eggNOG" id="ENOG502QUAH">
    <property type="taxonomic scope" value="Eukaryota"/>
</dbReference>
<dbReference type="HOGENOM" id="CLU_000288_22_1_1"/>
<dbReference type="InParanoid" id="Q9FZ59"/>
<dbReference type="OMA" id="CTDKRPE"/>
<dbReference type="OrthoDB" id="676979at2759"/>
<dbReference type="PhylomeDB" id="Q9FZ59"/>
<dbReference type="PRO" id="PR:Q9FZ59"/>
<dbReference type="Proteomes" id="UP000006548">
    <property type="component" value="Chromosome 1"/>
</dbReference>
<dbReference type="ExpressionAtlas" id="Q9FZ59">
    <property type="expression patterns" value="baseline and differential"/>
</dbReference>
<dbReference type="GO" id="GO:0005886">
    <property type="term" value="C:plasma membrane"/>
    <property type="evidence" value="ECO:0007669"/>
    <property type="project" value="UniProtKB-SubCell"/>
</dbReference>
<dbReference type="GO" id="GO:0005524">
    <property type="term" value="F:ATP binding"/>
    <property type="evidence" value="ECO:0007669"/>
    <property type="project" value="UniProtKB-KW"/>
</dbReference>
<dbReference type="GO" id="GO:0042277">
    <property type="term" value="F:peptide binding"/>
    <property type="evidence" value="ECO:0000314"/>
    <property type="project" value="TAIR"/>
</dbReference>
<dbReference type="GO" id="GO:0106310">
    <property type="term" value="F:protein serine kinase activity"/>
    <property type="evidence" value="ECO:0007669"/>
    <property type="project" value="RHEA"/>
</dbReference>
<dbReference type="GO" id="GO:0004674">
    <property type="term" value="F:protein serine/threonine kinase activity"/>
    <property type="evidence" value="ECO:0007669"/>
    <property type="project" value="UniProtKB-KW"/>
</dbReference>
<dbReference type="GO" id="GO:0042742">
    <property type="term" value="P:defense response to bacterium"/>
    <property type="evidence" value="ECO:0000315"/>
    <property type="project" value="TAIR"/>
</dbReference>
<dbReference type="GO" id="GO:0009753">
    <property type="term" value="P:response to jasmonic acid"/>
    <property type="evidence" value="ECO:0000270"/>
    <property type="project" value="TAIR"/>
</dbReference>
<dbReference type="GO" id="GO:0009611">
    <property type="term" value="P:response to wounding"/>
    <property type="evidence" value="ECO:0000270"/>
    <property type="project" value="TAIR"/>
</dbReference>
<dbReference type="FunFam" id="3.80.10.10:FF:000919">
    <property type="entry name" value="Leucine-rich repeat receptor-like protein kinase PEPR1"/>
    <property type="match status" value="1"/>
</dbReference>
<dbReference type="FunFam" id="3.80.10.10:FF:001996">
    <property type="entry name" value="Leucine-rich repeat receptor-like protein kinase PEPR1"/>
    <property type="match status" value="1"/>
</dbReference>
<dbReference type="FunFam" id="3.80.10.10:FF:001592">
    <property type="entry name" value="Leucine-rich repeat receptor-like protein kinase PEPR2"/>
    <property type="match status" value="1"/>
</dbReference>
<dbReference type="FunFam" id="3.30.200.20:FF:000260">
    <property type="entry name" value="LRR receptor-like serine/threonine-protein kinase RPK2"/>
    <property type="match status" value="1"/>
</dbReference>
<dbReference type="FunFam" id="3.80.10.10:FF:000400">
    <property type="entry name" value="Nuclear pore complex protein NUP107"/>
    <property type="match status" value="1"/>
</dbReference>
<dbReference type="FunFam" id="1.10.510.10:FF:000358">
    <property type="entry name" value="Putative leucine-rich repeat receptor-like serine/threonine-protein kinase"/>
    <property type="match status" value="1"/>
</dbReference>
<dbReference type="Gene3D" id="3.30.200.20">
    <property type="entry name" value="Phosphorylase Kinase, domain 1"/>
    <property type="match status" value="1"/>
</dbReference>
<dbReference type="Gene3D" id="3.80.10.10">
    <property type="entry name" value="Ribonuclease Inhibitor"/>
    <property type="match status" value="4"/>
</dbReference>
<dbReference type="Gene3D" id="1.10.510.10">
    <property type="entry name" value="Transferase(Phosphotransferase) domain 1"/>
    <property type="match status" value="1"/>
</dbReference>
<dbReference type="InterPro" id="IPR011009">
    <property type="entry name" value="Kinase-like_dom_sf"/>
</dbReference>
<dbReference type="InterPro" id="IPR001611">
    <property type="entry name" value="Leu-rich_rpt"/>
</dbReference>
<dbReference type="InterPro" id="IPR003591">
    <property type="entry name" value="Leu-rich_rpt_typical-subtyp"/>
</dbReference>
<dbReference type="InterPro" id="IPR032675">
    <property type="entry name" value="LRR_dom_sf"/>
</dbReference>
<dbReference type="InterPro" id="IPR013210">
    <property type="entry name" value="LRR_N_plant-typ"/>
</dbReference>
<dbReference type="InterPro" id="IPR051716">
    <property type="entry name" value="Plant_RL_S/T_kinase"/>
</dbReference>
<dbReference type="InterPro" id="IPR000719">
    <property type="entry name" value="Prot_kinase_dom"/>
</dbReference>
<dbReference type="InterPro" id="IPR017441">
    <property type="entry name" value="Protein_kinase_ATP_BS"/>
</dbReference>
<dbReference type="InterPro" id="IPR008271">
    <property type="entry name" value="Ser/Thr_kinase_AS"/>
</dbReference>
<dbReference type="PANTHER" id="PTHR48053">
    <property type="entry name" value="LEUCINE RICH REPEAT FAMILY PROTEIN, EXPRESSED"/>
    <property type="match status" value="1"/>
</dbReference>
<dbReference type="PANTHER" id="PTHR48053:SF71">
    <property type="entry name" value="LEUCINE RICH REPEAT FAMILY PROTEIN, EXPRESSED"/>
    <property type="match status" value="1"/>
</dbReference>
<dbReference type="Pfam" id="PF00560">
    <property type="entry name" value="LRR_1"/>
    <property type="match status" value="7"/>
</dbReference>
<dbReference type="Pfam" id="PF13855">
    <property type="entry name" value="LRR_8"/>
    <property type="match status" value="2"/>
</dbReference>
<dbReference type="Pfam" id="PF08263">
    <property type="entry name" value="LRRNT_2"/>
    <property type="match status" value="1"/>
</dbReference>
<dbReference type="Pfam" id="PF00069">
    <property type="entry name" value="Pkinase"/>
    <property type="match status" value="1"/>
</dbReference>
<dbReference type="PRINTS" id="PR00019">
    <property type="entry name" value="LEURICHRPT"/>
</dbReference>
<dbReference type="SMART" id="SM00369">
    <property type="entry name" value="LRR_TYP"/>
    <property type="match status" value="10"/>
</dbReference>
<dbReference type="SMART" id="SM00220">
    <property type="entry name" value="S_TKc"/>
    <property type="match status" value="1"/>
</dbReference>
<dbReference type="SUPFAM" id="SSF56112">
    <property type="entry name" value="Protein kinase-like (PK-like)"/>
    <property type="match status" value="1"/>
</dbReference>
<dbReference type="SUPFAM" id="SSF52047">
    <property type="entry name" value="RNI-like"/>
    <property type="match status" value="2"/>
</dbReference>
<dbReference type="PROSITE" id="PS51450">
    <property type="entry name" value="LRR"/>
    <property type="match status" value="16"/>
</dbReference>
<dbReference type="PROSITE" id="PS00107">
    <property type="entry name" value="PROTEIN_KINASE_ATP"/>
    <property type="match status" value="1"/>
</dbReference>
<dbReference type="PROSITE" id="PS50011">
    <property type="entry name" value="PROTEIN_KINASE_DOM"/>
    <property type="match status" value="1"/>
</dbReference>
<dbReference type="PROSITE" id="PS00108">
    <property type="entry name" value="PROTEIN_KINASE_ST"/>
    <property type="match status" value="1"/>
</dbReference>
<reference key="1">
    <citation type="journal article" date="2000" name="Nature">
        <title>Sequence and analysis of chromosome 1 of the plant Arabidopsis thaliana.</title>
        <authorList>
            <person name="Theologis A."/>
            <person name="Ecker J.R."/>
            <person name="Palm C.J."/>
            <person name="Federspiel N.A."/>
            <person name="Kaul S."/>
            <person name="White O."/>
            <person name="Alonso J."/>
            <person name="Altafi H."/>
            <person name="Araujo R."/>
            <person name="Bowman C.L."/>
            <person name="Brooks S.Y."/>
            <person name="Buehler E."/>
            <person name="Chan A."/>
            <person name="Chao Q."/>
            <person name="Chen H."/>
            <person name="Cheuk R.F."/>
            <person name="Chin C.W."/>
            <person name="Chung M.K."/>
            <person name="Conn L."/>
            <person name="Conway A.B."/>
            <person name="Conway A.R."/>
            <person name="Creasy T.H."/>
            <person name="Dewar K."/>
            <person name="Dunn P."/>
            <person name="Etgu P."/>
            <person name="Feldblyum T.V."/>
            <person name="Feng J.-D."/>
            <person name="Fong B."/>
            <person name="Fujii C.Y."/>
            <person name="Gill J.E."/>
            <person name="Goldsmith A.D."/>
            <person name="Haas B."/>
            <person name="Hansen N.F."/>
            <person name="Hughes B."/>
            <person name="Huizar L."/>
            <person name="Hunter J.L."/>
            <person name="Jenkins J."/>
            <person name="Johnson-Hopson C."/>
            <person name="Khan S."/>
            <person name="Khaykin E."/>
            <person name="Kim C.J."/>
            <person name="Koo H.L."/>
            <person name="Kremenetskaia I."/>
            <person name="Kurtz D.B."/>
            <person name="Kwan A."/>
            <person name="Lam B."/>
            <person name="Langin-Hooper S."/>
            <person name="Lee A."/>
            <person name="Lee J.M."/>
            <person name="Lenz C.A."/>
            <person name="Li J.H."/>
            <person name="Li Y.-P."/>
            <person name="Lin X."/>
            <person name="Liu S.X."/>
            <person name="Liu Z.A."/>
            <person name="Luros J.S."/>
            <person name="Maiti R."/>
            <person name="Marziali A."/>
            <person name="Militscher J."/>
            <person name="Miranda M."/>
            <person name="Nguyen M."/>
            <person name="Nierman W.C."/>
            <person name="Osborne B.I."/>
            <person name="Pai G."/>
            <person name="Peterson J."/>
            <person name="Pham P.K."/>
            <person name="Rizzo M."/>
            <person name="Rooney T."/>
            <person name="Rowley D."/>
            <person name="Sakano H."/>
            <person name="Salzberg S.L."/>
            <person name="Schwartz J.R."/>
            <person name="Shinn P."/>
            <person name="Southwick A.M."/>
            <person name="Sun H."/>
            <person name="Tallon L.J."/>
            <person name="Tambunga G."/>
            <person name="Toriumi M.J."/>
            <person name="Town C.D."/>
            <person name="Utterback T."/>
            <person name="Van Aken S."/>
            <person name="Vaysberg M."/>
            <person name="Vysotskaia V.S."/>
            <person name="Walker M."/>
            <person name="Wu D."/>
            <person name="Yu G."/>
            <person name="Fraser C.M."/>
            <person name="Venter J.C."/>
            <person name="Davis R.W."/>
        </authorList>
    </citation>
    <scope>NUCLEOTIDE SEQUENCE [LARGE SCALE GENOMIC DNA]</scope>
    <source>
        <strain>cv. Columbia</strain>
    </source>
</reference>
<reference key="2">
    <citation type="journal article" date="2017" name="Plant J.">
        <title>Araport11: a complete reannotation of the Arabidopsis thaliana reference genome.</title>
        <authorList>
            <person name="Cheng C.Y."/>
            <person name="Krishnakumar V."/>
            <person name="Chan A.P."/>
            <person name="Thibaud-Nissen F."/>
            <person name="Schobel S."/>
            <person name="Town C.D."/>
        </authorList>
    </citation>
    <scope>GENOME REANNOTATION</scope>
    <source>
        <strain>cv. Columbia</strain>
    </source>
</reference>
<reference key="3">
    <citation type="journal article" date="2010" name="BMC Genomics">
        <title>Genome-wide cloning and sequence analysis of leucine-rich repeat receptor-like protein kinase genes in Arabidopsis thaliana.</title>
        <authorList>
            <person name="Gou X."/>
            <person name="He K."/>
            <person name="Yang H."/>
            <person name="Yuan T."/>
            <person name="Lin H."/>
            <person name="Clouse S.D."/>
            <person name="Li J."/>
        </authorList>
    </citation>
    <scope>NUCLEOTIDE SEQUENCE [LARGE SCALE MRNA]</scope>
    <source>
        <strain>cv. Columbia</strain>
    </source>
</reference>
<reference key="4">
    <citation type="journal article" date="2010" name="Eur. J. Cell Biol.">
        <title>The multifunctional leucine-rich repeat receptor kinase BAK1 is implicated in Arabidopsis development and immunity.</title>
        <authorList>
            <person name="Postel S."/>
            <person name="Kuefner I."/>
            <person name="Beuter C."/>
            <person name="Mazzotta S."/>
            <person name="Schwedt A."/>
            <person name="Borlotti A."/>
            <person name="Halter T."/>
            <person name="Kemmerling B."/>
            <person name="Nuernberger T."/>
        </authorList>
    </citation>
    <scope>INTERACTION WITH BAK1</scope>
</reference>
<reference key="5">
    <citation type="journal article" date="2017" name="Dev. Cell">
        <title>Phosphate starvation-dependent iron mobilization induces CLE14 expression to trigger root meristem differentiation through CLV2/PEPR2 signaling.</title>
        <authorList>
            <person name="Gutierrez-Alanis D."/>
            <person name="Yong-Villalobos L."/>
            <person name="Jimenez-Sandoval P."/>
            <person name="Alatorre-Cobos F."/>
            <person name="Oropeza-Aburto A."/>
            <person name="Mora-Macias J."/>
            <person name="Sanchez-Rodriguez F."/>
            <person name="Cruz-Ramirez A."/>
            <person name="Herrera-Estrella L."/>
        </authorList>
    </citation>
    <scope>INTERACTION WITH CLE14</scope>
</reference>